<sequence length="78" mass="8835">MSNKGQLLQDPFLNALRKEHVPVSIYLVNGIKLQGNIESFDQYVVLLRNTVTQMVYKHAISTVVPARPVNFHPDSEQS</sequence>
<proteinExistence type="inferred from homology"/>
<accession>B2SXS5</accession>
<gene>
    <name evidence="1" type="primary">hfq</name>
    <name type="ordered locus">Bphyt_2536</name>
</gene>
<keyword id="KW-0694">RNA-binding</keyword>
<keyword id="KW-0346">Stress response</keyword>
<evidence type="ECO:0000255" key="1">
    <source>
        <dbReference type="HAMAP-Rule" id="MF_00436"/>
    </source>
</evidence>
<evidence type="ECO:0000255" key="2">
    <source>
        <dbReference type="PROSITE-ProRule" id="PRU01346"/>
    </source>
</evidence>
<organism>
    <name type="scientific">Paraburkholderia phytofirmans (strain DSM 17436 / LMG 22146 / PsJN)</name>
    <name type="common">Burkholderia phytofirmans</name>
    <dbReference type="NCBI Taxonomy" id="398527"/>
    <lineage>
        <taxon>Bacteria</taxon>
        <taxon>Pseudomonadati</taxon>
        <taxon>Pseudomonadota</taxon>
        <taxon>Betaproteobacteria</taxon>
        <taxon>Burkholderiales</taxon>
        <taxon>Burkholderiaceae</taxon>
        <taxon>Paraburkholderia</taxon>
    </lineage>
</organism>
<protein>
    <recommendedName>
        <fullName evidence="1">RNA-binding protein Hfq</fullName>
    </recommendedName>
</protein>
<dbReference type="EMBL" id="CP001052">
    <property type="protein sequence ID" value="ACD16931.1"/>
    <property type="molecule type" value="Genomic_DNA"/>
</dbReference>
<dbReference type="RefSeq" id="WP_006051315.1">
    <property type="nucleotide sequence ID" value="NC_010681.1"/>
</dbReference>
<dbReference type="SMR" id="B2SXS5"/>
<dbReference type="STRING" id="398527.Bphyt_2536"/>
<dbReference type="GeneID" id="97307361"/>
<dbReference type="KEGG" id="bpy:Bphyt_2536"/>
<dbReference type="eggNOG" id="COG1923">
    <property type="taxonomic scope" value="Bacteria"/>
</dbReference>
<dbReference type="HOGENOM" id="CLU_113688_2_2_4"/>
<dbReference type="OrthoDB" id="9799751at2"/>
<dbReference type="Proteomes" id="UP000001739">
    <property type="component" value="Chromosome 1"/>
</dbReference>
<dbReference type="GO" id="GO:0005829">
    <property type="term" value="C:cytosol"/>
    <property type="evidence" value="ECO:0007669"/>
    <property type="project" value="TreeGrafter"/>
</dbReference>
<dbReference type="GO" id="GO:0003723">
    <property type="term" value="F:RNA binding"/>
    <property type="evidence" value="ECO:0007669"/>
    <property type="project" value="UniProtKB-UniRule"/>
</dbReference>
<dbReference type="GO" id="GO:0006355">
    <property type="term" value="P:regulation of DNA-templated transcription"/>
    <property type="evidence" value="ECO:0007669"/>
    <property type="project" value="InterPro"/>
</dbReference>
<dbReference type="GO" id="GO:0043487">
    <property type="term" value="P:regulation of RNA stability"/>
    <property type="evidence" value="ECO:0007669"/>
    <property type="project" value="TreeGrafter"/>
</dbReference>
<dbReference type="GO" id="GO:0045974">
    <property type="term" value="P:regulation of translation, ncRNA-mediated"/>
    <property type="evidence" value="ECO:0007669"/>
    <property type="project" value="TreeGrafter"/>
</dbReference>
<dbReference type="CDD" id="cd01716">
    <property type="entry name" value="Hfq"/>
    <property type="match status" value="1"/>
</dbReference>
<dbReference type="FunFam" id="2.30.30.100:FF:000001">
    <property type="entry name" value="RNA-binding protein Hfq"/>
    <property type="match status" value="1"/>
</dbReference>
<dbReference type="Gene3D" id="2.30.30.100">
    <property type="match status" value="1"/>
</dbReference>
<dbReference type="HAMAP" id="MF_00436">
    <property type="entry name" value="Hfq"/>
    <property type="match status" value="1"/>
</dbReference>
<dbReference type="InterPro" id="IPR005001">
    <property type="entry name" value="Hfq"/>
</dbReference>
<dbReference type="InterPro" id="IPR010920">
    <property type="entry name" value="LSM_dom_sf"/>
</dbReference>
<dbReference type="InterPro" id="IPR047575">
    <property type="entry name" value="Sm"/>
</dbReference>
<dbReference type="NCBIfam" id="TIGR02383">
    <property type="entry name" value="Hfq"/>
    <property type="match status" value="1"/>
</dbReference>
<dbReference type="NCBIfam" id="NF001602">
    <property type="entry name" value="PRK00395.1"/>
    <property type="match status" value="1"/>
</dbReference>
<dbReference type="PANTHER" id="PTHR34772">
    <property type="entry name" value="RNA-BINDING PROTEIN HFQ"/>
    <property type="match status" value="1"/>
</dbReference>
<dbReference type="PANTHER" id="PTHR34772:SF1">
    <property type="entry name" value="RNA-BINDING PROTEIN HFQ"/>
    <property type="match status" value="1"/>
</dbReference>
<dbReference type="Pfam" id="PF17209">
    <property type="entry name" value="Hfq"/>
    <property type="match status" value="1"/>
</dbReference>
<dbReference type="SUPFAM" id="SSF50182">
    <property type="entry name" value="Sm-like ribonucleoproteins"/>
    <property type="match status" value="1"/>
</dbReference>
<dbReference type="PROSITE" id="PS52002">
    <property type="entry name" value="SM"/>
    <property type="match status" value="1"/>
</dbReference>
<name>HFQ_PARPJ</name>
<comment type="function">
    <text evidence="1">RNA chaperone that binds small regulatory RNA (sRNAs) and mRNAs to facilitate mRNA translational regulation in response to envelope stress, environmental stress and changes in metabolite concentrations. Also binds with high specificity to tRNAs.</text>
</comment>
<comment type="subunit">
    <text evidence="1">Homohexamer.</text>
</comment>
<comment type="similarity">
    <text evidence="1">Belongs to the Hfq family.</text>
</comment>
<feature type="chain" id="PRO_1000190315" description="RNA-binding protein Hfq">
    <location>
        <begin position="1"/>
        <end position="78"/>
    </location>
</feature>
<feature type="domain" description="Sm" evidence="2">
    <location>
        <begin position="10"/>
        <end position="69"/>
    </location>
</feature>
<reference key="1">
    <citation type="journal article" date="2011" name="J. Bacteriol.">
        <title>Complete genome sequence of the plant growth-promoting endophyte Burkholderia phytofirmans strain PsJN.</title>
        <authorList>
            <person name="Weilharter A."/>
            <person name="Mitter B."/>
            <person name="Shin M.V."/>
            <person name="Chain P.S."/>
            <person name="Nowak J."/>
            <person name="Sessitsch A."/>
        </authorList>
    </citation>
    <scope>NUCLEOTIDE SEQUENCE [LARGE SCALE GENOMIC DNA]</scope>
    <source>
        <strain>DSM 17436 / LMG 22146 / PsJN</strain>
    </source>
</reference>